<accession>Q49KX7</accession>
<protein>
    <recommendedName>
        <fullName evidence="1">Small ribosomal subunit protein bS18c</fullName>
    </recommendedName>
    <alternativeName>
        <fullName evidence="2">30S ribosomal protein S18, chloroplastic</fullName>
    </alternativeName>
</protein>
<proteinExistence type="inferred from homology"/>
<comment type="subunit">
    <text>Part of the 30S ribosomal subunit.</text>
</comment>
<comment type="subcellular location">
    <subcellularLocation>
        <location>Plastid</location>
        <location>Chloroplast</location>
    </subcellularLocation>
</comment>
<comment type="similarity">
    <text evidence="1">Belongs to the bacterial ribosomal protein bS18 family.</text>
</comment>
<gene>
    <name evidence="1" type="primary">rps18</name>
</gene>
<reference key="1">
    <citation type="journal article" date="2005" name="DNA Res.">
        <title>Complete nucleotide sequence of the chloroplast genome from the Tasmanian blue gum, Eucalyptus globulus (Myrtaceae).</title>
        <authorList>
            <person name="Steane D.A."/>
        </authorList>
    </citation>
    <scope>NUCLEOTIDE SEQUENCE [LARGE SCALE GENOMIC DNA]</scope>
</reference>
<dbReference type="EMBL" id="AY780259">
    <property type="protein sequence ID" value="AAX21050.1"/>
    <property type="molecule type" value="Genomic_DNA"/>
</dbReference>
<dbReference type="RefSeq" id="YP_636320.1">
    <property type="nucleotide sequence ID" value="NC_008115.1"/>
</dbReference>
<dbReference type="SMR" id="Q49KX7"/>
<dbReference type="GeneID" id="4108406"/>
<dbReference type="GO" id="GO:0009507">
    <property type="term" value="C:chloroplast"/>
    <property type="evidence" value="ECO:0007669"/>
    <property type="project" value="UniProtKB-SubCell"/>
</dbReference>
<dbReference type="GO" id="GO:0005763">
    <property type="term" value="C:mitochondrial small ribosomal subunit"/>
    <property type="evidence" value="ECO:0007669"/>
    <property type="project" value="TreeGrafter"/>
</dbReference>
<dbReference type="GO" id="GO:0070181">
    <property type="term" value="F:small ribosomal subunit rRNA binding"/>
    <property type="evidence" value="ECO:0007669"/>
    <property type="project" value="TreeGrafter"/>
</dbReference>
<dbReference type="GO" id="GO:0003735">
    <property type="term" value="F:structural constituent of ribosome"/>
    <property type="evidence" value="ECO:0007669"/>
    <property type="project" value="InterPro"/>
</dbReference>
<dbReference type="GO" id="GO:0006412">
    <property type="term" value="P:translation"/>
    <property type="evidence" value="ECO:0007669"/>
    <property type="project" value="UniProtKB-UniRule"/>
</dbReference>
<dbReference type="FunFam" id="4.10.640.10:FF:000002">
    <property type="entry name" value="30S ribosomal protein S18, chloroplastic"/>
    <property type="match status" value="1"/>
</dbReference>
<dbReference type="Gene3D" id="4.10.640.10">
    <property type="entry name" value="Ribosomal protein S18"/>
    <property type="match status" value="1"/>
</dbReference>
<dbReference type="HAMAP" id="MF_00270">
    <property type="entry name" value="Ribosomal_bS18"/>
    <property type="match status" value="1"/>
</dbReference>
<dbReference type="InterPro" id="IPR001648">
    <property type="entry name" value="Ribosomal_bS18"/>
</dbReference>
<dbReference type="InterPro" id="IPR018275">
    <property type="entry name" value="Ribosomal_bS18_CS"/>
</dbReference>
<dbReference type="InterPro" id="IPR036870">
    <property type="entry name" value="Ribosomal_bS18_sf"/>
</dbReference>
<dbReference type="NCBIfam" id="TIGR00165">
    <property type="entry name" value="S18"/>
    <property type="match status" value="1"/>
</dbReference>
<dbReference type="PANTHER" id="PTHR13479">
    <property type="entry name" value="30S RIBOSOMAL PROTEIN S18"/>
    <property type="match status" value="1"/>
</dbReference>
<dbReference type="PANTHER" id="PTHR13479:SF40">
    <property type="entry name" value="SMALL RIBOSOMAL SUBUNIT PROTEIN BS18M"/>
    <property type="match status" value="1"/>
</dbReference>
<dbReference type="Pfam" id="PF01084">
    <property type="entry name" value="Ribosomal_S18"/>
    <property type="match status" value="1"/>
</dbReference>
<dbReference type="PRINTS" id="PR00974">
    <property type="entry name" value="RIBOSOMALS18"/>
</dbReference>
<dbReference type="SUPFAM" id="SSF46911">
    <property type="entry name" value="Ribosomal protein S18"/>
    <property type="match status" value="1"/>
</dbReference>
<dbReference type="PROSITE" id="PS00057">
    <property type="entry name" value="RIBOSOMAL_S18"/>
    <property type="match status" value="1"/>
</dbReference>
<keyword id="KW-0150">Chloroplast</keyword>
<keyword id="KW-0934">Plastid</keyword>
<keyword id="KW-0687">Ribonucleoprotein</keyword>
<keyword id="KW-0689">Ribosomal protein</keyword>
<keyword id="KW-0694">RNA-binding</keyword>
<keyword id="KW-0699">rRNA-binding</keyword>
<evidence type="ECO:0000255" key="1">
    <source>
        <dbReference type="HAMAP-Rule" id="MF_00270"/>
    </source>
</evidence>
<evidence type="ECO:0000305" key="2"/>
<sequence>MEKSKRLFLKSKRSFRRRLPPIQSGDRIDYRNMSLISRFISEQGKILSRRVNRLTLKQQRLITIAIKQARILSLLPFLNNEKQFERSESTAGATGLRTINK</sequence>
<organism>
    <name type="scientific">Eucalyptus globulus subsp. globulus</name>
    <name type="common">Tasmanian blue gum</name>
    <dbReference type="NCBI Taxonomy" id="71271"/>
    <lineage>
        <taxon>Eukaryota</taxon>
        <taxon>Viridiplantae</taxon>
        <taxon>Streptophyta</taxon>
        <taxon>Embryophyta</taxon>
        <taxon>Tracheophyta</taxon>
        <taxon>Spermatophyta</taxon>
        <taxon>Magnoliopsida</taxon>
        <taxon>eudicotyledons</taxon>
        <taxon>Gunneridae</taxon>
        <taxon>Pentapetalae</taxon>
        <taxon>rosids</taxon>
        <taxon>malvids</taxon>
        <taxon>Myrtales</taxon>
        <taxon>Myrtaceae</taxon>
        <taxon>Myrtoideae</taxon>
        <taxon>Eucalypteae</taxon>
        <taxon>Eucalyptus</taxon>
    </lineage>
</organism>
<geneLocation type="chloroplast"/>
<feature type="chain" id="PRO_0000276868" description="Small ribosomal subunit protein bS18c">
    <location>
        <begin position="1"/>
        <end position="101"/>
    </location>
</feature>
<name>RR18_EUCGG</name>